<reference key="1">
    <citation type="journal article" date="2008" name="J. Bacteriol.">
        <title>Insights into plant cell wall degradation from the genome sequence of the soil bacterium Cellvibrio japonicus.</title>
        <authorList>
            <person name="DeBoy R.T."/>
            <person name="Mongodin E.F."/>
            <person name="Fouts D.E."/>
            <person name="Tailford L.E."/>
            <person name="Khouri H."/>
            <person name="Emerson J.B."/>
            <person name="Mohamoud Y."/>
            <person name="Watkins K."/>
            <person name="Henrissat B."/>
            <person name="Gilbert H.J."/>
            <person name="Nelson K.E."/>
        </authorList>
    </citation>
    <scope>NUCLEOTIDE SEQUENCE [LARGE SCALE GENOMIC DNA]</scope>
    <source>
        <strain>Ueda107</strain>
    </source>
</reference>
<accession>B3PJ64</accession>
<comment type="function">
    <text evidence="1">Involved in the regulation of the intracellular balance of NAD and NADP, and is a key enzyme in the biosynthesis of NADP. Catalyzes specifically the phosphorylation on 2'-hydroxyl of the adenosine moiety of NAD to yield NADP.</text>
</comment>
<comment type="catalytic activity">
    <reaction evidence="1">
        <text>NAD(+) + ATP = ADP + NADP(+) + H(+)</text>
        <dbReference type="Rhea" id="RHEA:18629"/>
        <dbReference type="ChEBI" id="CHEBI:15378"/>
        <dbReference type="ChEBI" id="CHEBI:30616"/>
        <dbReference type="ChEBI" id="CHEBI:57540"/>
        <dbReference type="ChEBI" id="CHEBI:58349"/>
        <dbReference type="ChEBI" id="CHEBI:456216"/>
        <dbReference type="EC" id="2.7.1.23"/>
    </reaction>
</comment>
<comment type="cofactor">
    <cofactor evidence="1">
        <name>a divalent metal cation</name>
        <dbReference type="ChEBI" id="CHEBI:60240"/>
    </cofactor>
</comment>
<comment type="subcellular location">
    <subcellularLocation>
        <location evidence="1">Cytoplasm</location>
    </subcellularLocation>
</comment>
<comment type="similarity">
    <text evidence="1">Belongs to the NAD kinase family.</text>
</comment>
<feature type="chain" id="PRO_1000120838" description="NAD kinase">
    <location>
        <begin position="1"/>
        <end position="300"/>
    </location>
</feature>
<feature type="active site" description="Proton acceptor" evidence="1">
    <location>
        <position position="77"/>
    </location>
</feature>
<feature type="binding site" evidence="1">
    <location>
        <begin position="77"/>
        <end position="78"/>
    </location>
    <ligand>
        <name>NAD(+)</name>
        <dbReference type="ChEBI" id="CHEBI:57540"/>
    </ligand>
</feature>
<feature type="binding site" evidence="1">
    <location>
        <begin position="151"/>
        <end position="152"/>
    </location>
    <ligand>
        <name>NAD(+)</name>
        <dbReference type="ChEBI" id="CHEBI:57540"/>
    </ligand>
</feature>
<feature type="binding site" evidence="1">
    <location>
        <position position="162"/>
    </location>
    <ligand>
        <name>NAD(+)</name>
        <dbReference type="ChEBI" id="CHEBI:57540"/>
    </ligand>
</feature>
<feature type="binding site" evidence="1">
    <location>
        <position position="179"/>
    </location>
    <ligand>
        <name>NAD(+)</name>
        <dbReference type="ChEBI" id="CHEBI:57540"/>
    </ligand>
</feature>
<feature type="binding site" evidence="1">
    <location>
        <position position="181"/>
    </location>
    <ligand>
        <name>NAD(+)</name>
        <dbReference type="ChEBI" id="CHEBI:57540"/>
    </ligand>
</feature>
<feature type="binding site" evidence="1">
    <location>
        <begin position="192"/>
        <end position="197"/>
    </location>
    <ligand>
        <name>NAD(+)</name>
        <dbReference type="ChEBI" id="CHEBI:57540"/>
    </ligand>
</feature>
<name>NADK_CELJU</name>
<organism>
    <name type="scientific">Cellvibrio japonicus (strain Ueda107)</name>
    <name type="common">Pseudomonas fluorescens subsp. cellulosa</name>
    <dbReference type="NCBI Taxonomy" id="498211"/>
    <lineage>
        <taxon>Bacteria</taxon>
        <taxon>Pseudomonadati</taxon>
        <taxon>Pseudomonadota</taxon>
        <taxon>Gammaproteobacteria</taxon>
        <taxon>Cellvibrionales</taxon>
        <taxon>Cellvibrionaceae</taxon>
        <taxon>Cellvibrio</taxon>
    </lineage>
</organism>
<protein>
    <recommendedName>
        <fullName evidence="1">NAD kinase</fullName>
        <ecNumber evidence="1">2.7.1.23</ecNumber>
    </recommendedName>
    <alternativeName>
        <fullName evidence="1">ATP-dependent NAD kinase</fullName>
    </alternativeName>
</protein>
<proteinExistence type="inferred from homology"/>
<dbReference type="EC" id="2.7.1.23" evidence="1"/>
<dbReference type="EMBL" id="CP000934">
    <property type="protein sequence ID" value="ACE86035.1"/>
    <property type="molecule type" value="Genomic_DNA"/>
</dbReference>
<dbReference type="RefSeq" id="WP_012487776.1">
    <property type="nucleotide sequence ID" value="NC_010995.1"/>
</dbReference>
<dbReference type="SMR" id="B3PJ64"/>
<dbReference type="STRING" id="498211.CJA_2174"/>
<dbReference type="KEGG" id="cja:CJA_2174"/>
<dbReference type="eggNOG" id="COG0061">
    <property type="taxonomic scope" value="Bacteria"/>
</dbReference>
<dbReference type="HOGENOM" id="CLU_008831_0_1_6"/>
<dbReference type="OrthoDB" id="9774737at2"/>
<dbReference type="Proteomes" id="UP000001036">
    <property type="component" value="Chromosome"/>
</dbReference>
<dbReference type="GO" id="GO:0005737">
    <property type="term" value="C:cytoplasm"/>
    <property type="evidence" value="ECO:0007669"/>
    <property type="project" value="UniProtKB-SubCell"/>
</dbReference>
<dbReference type="GO" id="GO:0005524">
    <property type="term" value="F:ATP binding"/>
    <property type="evidence" value="ECO:0007669"/>
    <property type="project" value="UniProtKB-KW"/>
</dbReference>
<dbReference type="GO" id="GO:0046872">
    <property type="term" value="F:metal ion binding"/>
    <property type="evidence" value="ECO:0007669"/>
    <property type="project" value="UniProtKB-UniRule"/>
</dbReference>
<dbReference type="GO" id="GO:0051287">
    <property type="term" value="F:NAD binding"/>
    <property type="evidence" value="ECO:0007669"/>
    <property type="project" value="UniProtKB-ARBA"/>
</dbReference>
<dbReference type="GO" id="GO:0003951">
    <property type="term" value="F:NAD+ kinase activity"/>
    <property type="evidence" value="ECO:0007669"/>
    <property type="project" value="UniProtKB-UniRule"/>
</dbReference>
<dbReference type="GO" id="GO:0019674">
    <property type="term" value="P:NAD metabolic process"/>
    <property type="evidence" value="ECO:0007669"/>
    <property type="project" value="InterPro"/>
</dbReference>
<dbReference type="GO" id="GO:0006741">
    <property type="term" value="P:NADP biosynthetic process"/>
    <property type="evidence" value="ECO:0007669"/>
    <property type="project" value="UniProtKB-UniRule"/>
</dbReference>
<dbReference type="FunFam" id="2.60.200.30:FF:000009">
    <property type="entry name" value="Poly(P)/ATP NAD kinase"/>
    <property type="match status" value="1"/>
</dbReference>
<dbReference type="Gene3D" id="3.40.50.10330">
    <property type="entry name" value="Probable inorganic polyphosphate/atp-NAD kinase, domain 1"/>
    <property type="match status" value="1"/>
</dbReference>
<dbReference type="Gene3D" id="2.60.200.30">
    <property type="entry name" value="Probable inorganic polyphosphate/atp-NAD kinase, domain 2"/>
    <property type="match status" value="1"/>
</dbReference>
<dbReference type="HAMAP" id="MF_00361">
    <property type="entry name" value="NAD_kinase"/>
    <property type="match status" value="1"/>
</dbReference>
<dbReference type="InterPro" id="IPR017438">
    <property type="entry name" value="ATP-NAD_kinase_N"/>
</dbReference>
<dbReference type="InterPro" id="IPR017437">
    <property type="entry name" value="ATP-NAD_kinase_PpnK-typ_C"/>
</dbReference>
<dbReference type="InterPro" id="IPR016064">
    <property type="entry name" value="NAD/diacylglycerol_kinase_sf"/>
</dbReference>
<dbReference type="InterPro" id="IPR002504">
    <property type="entry name" value="NADK"/>
</dbReference>
<dbReference type="NCBIfam" id="NF002306">
    <property type="entry name" value="PRK01231.1"/>
    <property type="match status" value="1"/>
</dbReference>
<dbReference type="PANTHER" id="PTHR20275">
    <property type="entry name" value="NAD KINASE"/>
    <property type="match status" value="1"/>
</dbReference>
<dbReference type="PANTHER" id="PTHR20275:SF0">
    <property type="entry name" value="NAD KINASE"/>
    <property type="match status" value="1"/>
</dbReference>
<dbReference type="Pfam" id="PF01513">
    <property type="entry name" value="NAD_kinase"/>
    <property type="match status" value="1"/>
</dbReference>
<dbReference type="Pfam" id="PF20143">
    <property type="entry name" value="NAD_kinase_C"/>
    <property type="match status" value="1"/>
</dbReference>
<dbReference type="SUPFAM" id="SSF111331">
    <property type="entry name" value="NAD kinase/diacylglycerol kinase-like"/>
    <property type="match status" value="1"/>
</dbReference>
<keyword id="KW-0067">ATP-binding</keyword>
<keyword id="KW-0963">Cytoplasm</keyword>
<keyword id="KW-0418">Kinase</keyword>
<keyword id="KW-0520">NAD</keyword>
<keyword id="KW-0521">NADP</keyword>
<keyword id="KW-0547">Nucleotide-binding</keyword>
<keyword id="KW-1185">Reference proteome</keyword>
<keyword id="KW-0808">Transferase</keyword>
<evidence type="ECO:0000255" key="1">
    <source>
        <dbReference type="HAMAP-Rule" id="MF_00361"/>
    </source>
</evidence>
<gene>
    <name evidence="1" type="primary">nadK</name>
    <name type="ordered locus">CJA_2174</name>
</gene>
<sequence length="300" mass="32991">MTHFSTIGLIGHLNNERAVYSIERLIRFLQQRGKDFVLEVETAARISDIALTQAARQIMDMDALGQICDLVIVVGGDGSLLSGARALAKYQVPLLGVNRGRLGFLTDITPEQIEQKMAEVLTGQFASEKRFLLDMEVRRDGQVIALADALNDVVLHTGQFIHMLEFEIHVDGSFVTSQRSDGLIVSTPTGSTAYSLSGGGPILHPKLDAIVIVPMNPHTLSSRPIVVSGDSEILLMVGEHNRALPMVTCDGHSHAEVQTGDEIIIRKKPQLLELLHPLDYNFYERCRSKLGWGGHLLKPE</sequence>